<accession>Q2YYJ3</accession>
<gene>
    <name evidence="1" type="primary">lacA</name>
    <name type="ordered locus">SAB2076c</name>
</gene>
<keyword id="KW-0413">Isomerase</keyword>
<keyword id="KW-0423">Lactose metabolism</keyword>
<sequence length="142" mass="15395">MAIIIGSDEAGKRLKEVIKSYLLDNKYDVVDVTEGQEVDFVDATLAVAKDVQSQEGNLGIVIDAFGAGSFMVATKIKGMIAAEVSDERSGYMTRGHNNSRMITMGSEIVGDTLAKNVVKGFVEGKYDGGRHQIRVDMLNKMC</sequence>
<reference key="1">
    <citation type="journal article" date="2007" name="PLoS ONE">
        <title>Molecular correlates of host specialization in Staphylococcus aureus.</title>
        <authorList>
            <person name="Herron-Olson L."/>
            <person name="Fitzgerald J.R."/>
            <person name="Musser J.M."/>
            <person name="Kapur V."/>
        </authorList>
    </citation>
    <scope>NUCLEOTIDE SEQUENCE [LARGE SCALE GENOMIC DNA]</scope>
    <source>
        <strain>bovine RF122 / ET3-1</strain>
    </source>
</reference>
<dbReference type="EC" id="5.3.1.26" evidence="1"/>
<dbReference type="EMBL" id="AJ938182">
    <property type="protein sequence ID" value="CAI81765.1"/>
    <property type="molecule type" value="Genomic_DNA"/>
</dbReference>
<dbReference type="RefSeq" id="WP_000974608.1">
    <property type="nucleotide sequence ID" value="NC_007622.1"/>
</dbReference>
<dbReference type="SMR" id="Q2YYJ3"/>
<dbReference type="GeneID" id="98347039"/>
<dbReference type="KEGG" id="sab:SAB2076c"/>
<dbReference type="HOGENOM" id="CLU_091396_4_2_9"/>
<dbReference type="UniPathway" id="UPA00702">
    <property type="reaction ID" value="UER00714"/>
</dbReference>
<dbReference type="GO" id="GO:0050044">
    <property type="term" value="F:galactose-6-phosphate isomerase activity"/>
    <property type="evidence" value="ECO:0007669"/>
    <property type="project" value="UniProtKB-UniRule"/>
</dbReference>
<dbReference type="GO" id="GO:0004751">
    <property type="term" value="F:ribose-5-phosphate isomerase activity"/>
    <property type="evidence" value="ECO:0007669"/>
    <property type="project" value="TreeGrafter"/>
</dbReference>
<dbReference type="GO" id="GO:0019316">
    <property type="term" value="P:D-allose catabolic process"/>
    <property type="evidence" value="ECO:0007669"/>
    <property type="project" value="TreeGrafter"/>
</dbReference>
<dbReference type="GO" id="GO:0019388">
    <property type="term" value="P:galactose catabolic process"/>
    <property type="evidence" value="ECO:0007669"/>
    <property type="project" value="UniProtKB-UniPathway"/>
</dbReference>
<dbReference type="GO" id="GO:0019512">
    <property type="term" value="P:lactose catabolic process via tagatose-6-phosphate"/>
    <property type="evidence" value="ECO:0007669"/>
    <property type="project" value="UniProtKB-UniRule"/>
</dbReference>
<dbReference type="GO" id="GO:0009052">
    <property type="term" value="P:pentose-phosphate shunt, non-oxidative branch"/>
    <property type="evidence" value="ECO:0007669"/>
    <property type="project" value="TreeGrafter"/>
</dbReference>
<dbReference type="Gene3D" id="3.40.1400.10">
    <property type="entry name" value="Sugar-phosphate isomerase, RpiB/LacA/LacB"/>
    <property type="match status" value="1"/>
</dbReference>
<dbReference type="HAMAP" id="MF_01555">
    <property type="entry name" value="LacA"/>
    <property type="match status" value="1"/>
</dbReference>
<dbReference type="InterPro" id="IPR004783">
    <property type="entry name" value="LacA"/>
</dbReference>
<dbReference type="InterPro" id="IPR003500">
    <property type="entry name" value="RpiB_LacA_LacB"/>
</dbReference>
<dbReference type="InterPro" id="IPR036569">
    <property type="entry name" value="RpiB_LacA_LacB_sf"/>
</dbReference>
<dbReference type="NCBIfam" id="TIGR01118">
    <property type="entry name" value="lacA"/>
    <property type="match status" value="1"/>
</dbReference>
<dbReference type="NCBIfam" id="NF006380">
    <property type="entry name" value="PRK08621.1"/>
    <property type="match status" value="1"/>
</dbReference>
<dbReference type="NCBIfam" id="TIGR00689">
    <property type="entry name" value="rpiB_lacA_lacB"/>
    <property type="match status" value="1"/>
</dbReference>
<dbReference type="PANTHER" id="PTHR30345:SF5">
    <property type="entry name" value="GALACTOSE-6-PHOSPHATE ISOMERASE SUBUNIT LACA"/>
    <property type="match status" value="1"/>
</dbReference>
<dbReference type="PANTHER" id="PTHR30345">
    <property type="entry name" value="RIBOSE-5-PHOSPHATE ISOMERASE B"/>
    <property type="match status" value="1"/>
</dbReference>
<dbReference type="Pfam" id="PF02502">
    <property type="entry name" value="LacAB_rpiB"/>
    <property type="match status" value="1"/>
</dbReference>
<dbReference type="PIRSF" id="PIRSF005384">
    <property type="entry name" value="RpiB_LacA_B"/>
    <property type="match status" value="1"/>
</dbReference>
<dbReference type="SUPFAM" id="SSF89623">
    <property type="entry name" value="Ribose/Galactose isomerase RpiB/AlsB"/>
    <property type="match status" value="1"/>
</dbReference>
<name>LACA_STAAB</name>
<feature type="chain" id="PRO_1000068923" description="Galactose-6-phosphate isomerase subunit LacA">
    <location>
        <begin position="1"/>
        <end position="142"/>
    </location>
</feature>
<protein>
    <recommendedName>
        <fullName evidence="1">Galactose-6-phosphate isomerase subunit LacA</fullName>
        <ecNumber evidence="1">5.3.1.26</ecNumber>
    </recommendedName>
</protein>
<proteinExistence type="inferred from homology"/>
<comment type="catalytic activity">
    <reaction evidence="1">
        <text>aldehydo-D-galactose 6-phosphate = keto-D-tagatose 6-phosphate</text>
        <dbReference type="Rhea" id="RHEA:13033"/>
        <dbReference type="ChEBI" id="CHEBI:58255"/>
        <dbReference type="ChEBI" id="CHEBI:134283"/>
        <dbReference type="EC" id="5.3.1.26"/>
    </reaction>
</comment>
<comment type="pathway">
    <text evidence="1">Carbohydrate metabolism; D-galactose 6-phosphate degradation; D-tagatose 6-phosphate from D-galactose 6-phosphate: step 1/1.</text>
</comment>
<comment type="subunit">
    <text evidence="1">Heteromultimeric protein consisting of LacA and LacB.</text>
</comment>
<comment type="similarity">
    <text evidence="1">Belongs to the LacAB/RpiB family.</text>
</comment>
<evidence type="ECO:0000255" key="1">
    <source>
        <dbReference type="HAMAP-Rule" id="MF_01555"/>
    </source>
</evidence>
<organism>
    <name type="scientific">Staphylococcus aureus (strain bovine RF122 / ET3-1)</name>
    <dbReference type="NCBI Taxonomy" id="273036"/>
    <lineage>
        <taxon>Bacteria</taxon>
        <taxon>Bacillati</taxon>
        <taxon>Bacillota</taxon>
        <taxon>Bacilli</taxon>
        <taxon>Bacillales</taxon>
        <taxon>Staphylococcaceae</taxon>
        <taxon>Staphylococcus</taxon>
    </lineage>
</organism>